<organism>
    <name type="scientific">Lacticaseibacillus casei</name>
    <name type="common">Lactobacillus casei</name>
    <dbReference type="NCBI Taxonomy" id="1582"/>
    <lineage>
        <taxon>Bacteria</taxon>
        <taxon>Bacillati</taxon>
        <taxon>Bacillota</taxon>
        <taxon>Bacilli</taxon>
        <taxon>Lactobacillales</taxon>
        <taxon>Lactobacillaceae</taxon>
        <taxon>Lacticaseibacillus</taxon>
    </lineage>
</organism>
<name>PURL_LACCA</name>
<gene>
    <name evidence="1" type="primary">purL</name>
</gene>
<sequence length="740" mass="79481">MYVVHVEMSPEAIATQKPYLDLGLTEAEYDRFAELIGHQPNDTEIGLASGMWSEHCAYKYSKPVLRQFWTKNERVLMGPGEGAGVIDIGEGKAVVFKAESHNHPSAVEPYEGAATGVGGIIRDIFSIGAKPVAMLDSLAFGDIEQPHTQHLVDRIVAGIGGYGNAIGIPTVGGETNFDGSYTRNPLVNAMCVGIMDKDQIQKGKAAGVGNALIYVGAKTGRDGINGASFASGDFSDEEAADRSAVQVGDPFMEKLLMDACLEITGHHQEALVGIQDMGAAGLVSSSVEMAGKANSGMVLDLDLIPQREAEMTPFEIMLSESQERMLLCVRAGFEQEVLAVFADYDLDAAIVGHVIAGHQYQLYHHGKLVCDVPVSSLTDDAPIYHQQGKMPKRLAQPAADFDPIITDPVQIWTDMMAMPTIADKSSLYKRYDAQVQTNTVVLPGSDAAVIRIRGTHRALAMTTDSKDVTCILIAGGCGNECWLKRARNLVASGAEPLGITDCLNFGDPTKPEAFYELAEAAKGIIAATKAFNAPVISGNVSLYNETNGEAIYPTPMIGMVGLIEDLSTITTAAFKQADDLIYLVGETHGDFNGSELQKLQTGEVTGKLFDFDLEAEKQHQHFVLKAIREHLITAAHDLSDGGLLVALAEMGFDAQLGAQINVTLPTAWGFSETQGRFLLTVSPENQAAFEALHGPAQLIGRVQAPPEFEVTTVNQHFSASLQQLQTAFEEALPCHMNQKA</sequence>
<dbReference type="EC" id="6.3.5.3" evidence="1"/>
<dbReference type="EMBL" id="M85265">
    <property type="protein sequence ID" value="AAC36947.1"/>
    <property type="molecule type" value="Genomic_DNA"/>
</dbReference>
<dbReference type="PIR" id="JC1290">
    <property type="entry name" value="JC1290"/>
</dbReference>
<dbReference type="SMR" id="P35852"/>
<dbReference type="STRING" id="1582.AAW28_12370"/>
<dbReference type="eggNOG" id="COG0046">
    <property type="taxonomic scope" value="Bacteria"/>
</dbReference>
<dbReference type="UniPathway" id="UPA00074">
    <property type="reaction ID" value="UER00128"/>
</dbReference>
<dbReference type="GO" id="GO:0005737">
    <property type="term" value="C:cytoplasm"/>
    <property type="evidence" value="ECO:0007669"/>
    <property type="project" value="UniProtKB-SubCell"/>
</dbReference>
<dbReference type="GO" id="GO:0005524">
    <property type="term" value="F:ATP binding"/>
    <property type="evidence" value="ECO:0007669"/>
    <property type="project" value="UniProtKB-UniRule"/>
</dbReference>
<dbReference type="GO" id="GO:0000287">
    <property type="term" value="F:magnesium ion binding"/>
    <property type="evidence" value="ECO:0007669"/>
    <property type="project" value="UniProtKB-UniRule"/>
</dbReference>
<dbReference type="GO" id="GO:0004642">
    <property type="term" value="F:phosphoribosylformylglycinamidine synthase activity"/>
    <property type="evidence" value="ECO:0007669"/>
    <property type="project" value="UniProtKB-UniRule"/>
</dbReference>
<dbReference type="GO" id="GO:0006189">
    <property type="term" value="P:'de novo' IMP biosynthetic process"/>
    <property type="evidence" value="ECO:0007669"/>
    <property type="project" value="UniProtKB-UniRule"/>
</dbReference>
<dbReference type="CDD" id="cd02203">
    <property type="entry name" value="PurL_repeat1"/>
    <property type="match status" value="1"/>
</dbReference>
<dbReference type="CDD" id="cd02204">
    <property type="entry name" value="PurL_repeat2"/>
    <property type="match status" value="1"/>
</dbReference>
<dbReference type="FunFam" id="3.30.1330.10:FF:000004">
    <property type="entry name" value="Phosphoribosylformylglycinamidine synthase subunit PurL"/>
    <property type="match status" value="1"/>
</dbReference>
<dbReference type="Gene3D" id="3.90.650.10">
    <property type="entry name" value="PurM-like C-terminal domain"/>
    <property type="match status" value="2"/>
</dbReference>
<dbReference type="Gene3D" id="3.30.1330.10">
    <property type="entry name" value="PurM-like, N-terminal domain"/>
    <property type="match status" value="2"/>
</dbReference>
<dbReference type="HAMAP" id="MF_00420">
    <property type="entry name" value="PurL_2"/>
    <property type="match status" value="1"/>
</dbReference>
<dbReference type="InterPro" id="IPR010074">
    <property type="entry name" value="PRibForGlyAmidine_synth_PurL"/>
</dbReference>
<dbReference type="InterPro" id="IPR041609">
    <property type="entry name" value="PurL_linker"/>
</dbReference>
<dbReference type="InterPro" id="IPR010918">
    <property type="entry name" value="PurM-like_C_dom"/>
</dbReference>
<dbReference type="InterPro" id="IPR036676">
    <property type="entry name" value="PurM-like_C_sf"/>
</dbReference>
<dbReference type="InterPro" id="IPR016188">
    <property type="entry name" value="PurM-like_N"/>
</dbReference>
<dbReference type="InterPro" id="IPR036921">
    <property type="entry name" value="PurM-like_N_sf"/>
</dbReference>
<dbReference type="NCBIfam" id="TIGR01736">
    <property type="entry name" value="FGAM_synth_II"/>
    <property type="match status" value="1"/>
</dbReference>
<dbReference type="NCBIfam" id="NF002290">
    <property type="entry name" value="PRK01213.1"/>
    <property type="match status" value="1"/>
</dbReference>
<dbReference type="PANTHER" id="PTHR43555">
    <property type="entry name" value="PHOSPHORIBOSYLFORMYLGLYCINAMIDINE SYNTHASE SUBUNIT PURL"/>
    <property type="match status" value="1"/>
</dbReference>
<dbReference type="PANTHER" id="PTHR43555:SF1">
    <property type="entry name" value="PHOSPHORIBOSYLFORMYLGLYCINAMIDINE SYNTHASE SUBUNIT PURL"/>
    <property type="match status" value="1"/>
</dbReference>
<dbReference type="Pfam" id="PF00586">
    <property type="entry name" value="AIRS"/>
    <property type="match status" value="2"/>
</dbReference>
<dbReference type="Pfam" id="PF02769">
    <property type="entry name" value="AIRS_C"/>
    <property type="match status" value="2"/>
</dbReference>
<dbReference type="Pfam" id="PF18072">
    <property type="entry name" value="FGAR-AT_linker"/>
    <property type="match status" value="1"/>
</dbReference>
<dbReference type="PIRSF" id="PIRSF001587">
    <property type="entry name" value="FGAM_synthase_II"/>
    <property type="match status" value="1"/>
</dbReference>
<dbReference type="SUPFAM" id="SSF109736">
    <property type="entry name" value="FGAM synthase PurL, linker domain"/>
    <property type="match status" value="1"/>
</dbReference>
<dbReference type="SUPFAM" id="SSF56042">
    <property type="entry name" value="PurM C-terminal domain-like"/>
    <property type="match status" value="2"/>
</dbReference>
<dbReference type="SUPFAM" id="SSF55326">
    <property type="entry name" value="PurM N-terminal domain-like"/>
    <property type="match status" value="2"/>
</dbReference>
<keyword id="KW-0067">ATP-binding</keyword>
<keyword id="KW-0963">Cytoplasm</keyword>
<keyword id="KW-0436">Ligase</keyword>
<keyword id="KW-0460">Magnesium</keyword>
<keyword id="KW-0479">Metal-binding</keyword>
<keyword id="KW-0547">Nucleotide-binding</keyword>
<keyword id="KW-0658">Purine biosynthesis</keyword>
<reference key="1">
    <citation type="journal article" date="1992" name="Gene">
        <title>Isolation and complete sequence of the purL gene encoding FGAM synthase II in Lactobacillus casei.</title>
        <authorList>
            <person name="Gu Z.-M."/>
            <person name="Martindale D.W."/>
            <person name="Lee B.H."/>
        </authorList>
    </citation>
    <scope>NUCLEOTIDE SEQUENCE [GENOMIC DNA]</scope>
</reference>
<reference key="2">
    <citation type="journal article" date="1993" name="Gene">
        <authorList>
            <person name="Gu Z.-M."/>
            <person name="Martindale D.W."/>
            <person name="Lee B.H."/>
        </authorList>
    </citation>
    <scope>ERRATUM OF PUBMED:1398079</scope>
    <scope>SEQUENCE REVISION</scope>
</reference>
<proteinExistence type="inferred from homology"/>
<feature type="chain" id="PRO_0000100460" description="Phosphoribosylformylglycinamidine synthase subunit PurL">
    <location>
        <begin position="1"/>
        <end position="740"/>
    </location>
</feature>
<feature type="active site" evidence="1">
    <location>
        <position position="55"/>
    </location>
</feature>
<feature type="active site" description="Proton acceptor" evidence="1">
    <location>
        <position position="101"/>
    </location>
</feature>
<feature type="binding site" evidence="1">
    <location>
        <position position="58"/>
    </location>
    <ligand>
        <name>ATP</name>
        <dbReference type="ChEBI" id="CHEBI:30616"/>
    </ligand>
</feature>
<feature type="binding site" evidence="1">
    <location>
        <position position="97"/>
    </location>
    <ligand>
        <name>ATP</name>
        <dbReference type="ChEBI" id="CHEBI:30616"/>
    </ligand>
</feature>
<feature type="binding site" evidence="1">
    <location>
        <position position="99"/>
    </location>
    <ligand>
        <name>Mg(2+)</name>
        <dbReference type="ChEBI" id="CHEBI:18420"/>
        <label>1</label>
    </ligand>
</feature>
<feature type="binding site" evidence="1">
    <location>
        <begin position="100"/>
        <end position="103"/>
    </location>
    <ligand>
        <name>substrate</name>
    </ligand>
</feature>
<feature type="binding site" evidence="1">
    <location>
        <position position="122"/>
    </location>
    <ligand>
        <name>substrate</name>
    </ligand>
</feature>
<feature type="binding site" evidence="1">
    <location>
        <position position="123"/>
    </location>
    <ligand>
        <name>Mg(2+)</name>
        <dbReference type="ChEBI" id="CHEBI:18420"/>
        <label>2</label>
    </ligand>
</feature>
<feature type="binding site" evidence="1">
    <location>
        <position position="246"/>
    </location>
    <ligand>
        <name>substrate</name>
    </ligand>
</feature>
<feature type="binding site" evidence="1">
    <location>
        <position position="276"/>
    </location>
    <ligand>
        <name>Mg(2+)</name>
        <dbReference type="ChEBI" id="CHEBI:18420"/>
        <label>2</label>
    </ligand>
</feature>
<feature type="binding site" evidence="1">
    <location>
        <begin position="320"/>
        <end position="322"/>
    </location>
    <ligand>
        <name>substrate</name>
    </ligand>
</feature>
<feature type="binding site" evidence="1">
    <location>
        <position position="501"/>
    </location>
    <ligand>
        <name>ATP</name>
        <dbReference type="ChEBI" id="CHEBI:30616"/>
    </ligand>
</feature>
<feature type="binding site" evidence="1">
    <location>
        <position position="538"/>
    </location>
    <ligand>
        <name>ATP</name>
        <dbReference type="ChEBI" id="CHEBI:30616"/>
    </ligand>
</feature>
<feature type="binding site" evidence="1">
    <location>
        <position position="539"/>
    </location>
    <ligand>
        <name>Mg(2+)</name>
        <dbReference type="ChEBI" id="CHEBI:18420"/>
        <label>1</label>
    </ligand>
</feature>
<feature type="binding site" evidence="1">
    <location>
        <position position="541"/>
    </location>
    <ligand>
        <name>substrate</name>
    </ligand>
</feature>
<evidence type="ECO:0000255" key="1">
    <source>
        <dbReference type="HAMAP-Rule" id="MF_00420"/>
    </source>
</evidence>
<accession>P35852</accession>
<comment type="function">
    <text evidence="1">Part of the phosphoribosylformylglycinamidine synthase complex involved in the purines biosynthetic pathway. Catalyzes the ATP-dependent conversion of formylglycinamide ribonucleotide (FGAR) and glutamine to yield formylglycinamidine ribonucleotide (FGAM) and glutamate. The FGAM synthase complex is composed of three subunits. PurQ produces an ammonia molecule by converting glutamine to glutamate. PurL transfers the ammonia molecule to FGAR to form FGAM in an ATP-dependent manner. PurS interacts with PurQ and PurL and is thought to assist in the transfer of the ammonia molecule from PurQ to PurL.</text>
</comment>
<comment type="catalytic activity">
    <reaction evidence="1">
        <text>N(2)-formyl-N(1)-(5-phospho-beta-D-ribosyl)glycinamide + L-glutamine + ATP + H2O = 2-formamido-N(1)-(5-O-phospho-beta-D-ribosyl)acetamidine + L-glutamate + ADP + phosphate + H(+)</text>
        <dbReference type="Rhea" id="RHEA:17129"/>
        <dbReference type="ChEBI" id="CHEBI:15377"/>
        <dbReference type="ChEBI" id="CHEBI:15378"/>
        <dbReference type="ChEBI" id="CHEBI:29985"/>
        <dbReference type="ChEBI" id="CHEBI:30616"/>
        <dbReference type="ChEBI" id="CHEBI:43474"/>
        <dbReference type="ChEBI" id="CHEBI:58359"/>
        <dbReference type="ChEBI" id="CHEBI:147286"/>
        <dbReference type="ChEBI" id="CHEBI:147287"/>
        <dbReference type="ChEBI" id="CHEBI:456216"/>
        <dbReference type="EC" id="6.3.5.3"/>
    </reaction>
</comment>
<comment type="pathway">
    <text evidence="1">Purine metabolism; IMP biosynthesis via de novo pathway; 5-amino-1-(5-phospho-D-ribosyl)imidazole from N(2)-formyl-N(1)-(5-phospho-D-ribosyl)glycinamide: step 1/2.</text>
</comment>
<comment type="subunit">
    <text evidence="1">Monomer. Part of the FGAM synthase complex composed of 1 PurL, 1 PurQ and 2 PurS subunits.</text>
</comment>
<comment type="subcellular location">
    <subcellularLocation>
        <location evidence="1">Cytoplasm</location>
    </subcellularLocation>
</comment>
<comment type="similarity">
    <text evidence="1">Belongs to the FGAMS family.</text>
</comment>
<protein>
    <recommendedName>
        <fullName evidence="1">Phosphoribosylformylglycinamidine synthase subunit PurL</fullName>
        <shortName evidence="1">FGAM synthase</shortName>
        <ecNumber evidence="1">6.3.5.3</ecNumber>
    </recommendedName>
    <alternativeName>
        <fullName evidence="1">Formylglycinamide ribonucleotide amidotransferase subunit II</fullName>
        <shortName evidence="1">FGAR amidotransferase II</shortName>
        <shortName evidence="1">FGAR-AT II</shortName>
    </alternativeName>
    <alternativeName>
        <fullName evidence="1">Glutamine amidotransferase PurL</fullName>
    </alternativeName>
    <alternativeName>
        <fullName evidence="1">Phosphoribosylformylglycinamidine synthase subunit II</fullName>
    </alternativeName>
</protein>